<reference key="1">
    <citation type="journal article" date="2007" name="Science">
        <title>The Fusarium graminearum genome reveals a link between localized polymorphism and pathogen specialization.</title>
        <authorList>
            <person name="Cuomo C.A."/>
            <person name="Gueldener U."/>
            <person name="Xu J.-R."/>
            <person name="Trail F."/>
            <person name="Turgeon B.G."/>
            <person name="Di Pietro A."/>
            <person name="Walton J.D."/>
            <person name="Ma L.-J."/>
            <person name="Baker S.E."/>
            <person name="Rep M."/>
            <person name="Adam G."/>
            <person name="Antoniw J."/>
            <person name="Baldwin T."/>
            <person name="Calvo S.E."/>
            <person name="Chang Y.-L."/>
            <person name="DeCaprio D."/>
            <person name="Gale L.R."/>
            <person name="Gnerre S."/>
            <person name="Goswami R.S."/>
            <person name="Hammond-Kosack K."/>
            <person name="Harris L.J."/>
            <person name="Hilburn K."/>
            <person name="Kennell J.C."/>
            <person name="Kroken S."/>
            <person name="Magnuson J.K."/>
            <person name="Mannhaupt G."/>
            <person name="Mauceli E.W."/>
            <person name="Mewes H.-W."/>
            <person name="Mitterbauer R."/>
            <person name="Muehlbauer G."/>
            <person name="Muensterkoetter M."/>
            <person name="Nelson D."/>
            <person name="O'Donnell K."/>
            <person name="Ouellet T."/>
            <person name="Qi W."/>
            <person name="Quesneville H."/>
            <person name="Roncero M.I.G."/>
            <person name="Seong K.-Y."/>
            <person name="Tetko I.V."/>
            <person name="Urban M."/>
            <person name="Waalwijk C."/>
            <person name="Ward T.J."/>
            <person name="Yao J."/>
            <person name="Birren B.W."/>
            <person name="Kistler H.C."/>
        </authorList>
    </citation>
    <scope>NUCLEOTIDE SEQUENCE [LARGE SCALE GENOMIC DNA]</scope>
    <source>
        <strain>ATCC MYA-4620 / CBS 123657 / FGSC 9075 / NRRL 31084 / PH-1</strain>
    </source>
</reference>
<reference key="2">
    <citation type="journal article" date="2010" name="Nature">
        <title>Comparative genomics reveals mobile pathogenicity chromosomes in Fusarium.</title>
        <authorList>
            <person name="Ma L.-J."/>
            <person name="van der Does H.C."/>
            <person name="Borkovich K.A."/>
            <person name="Coleman J.J."/>
            <person name="Daboussi M.-J."/>
            <person name="Di Pietro A."/>
            <person name="Dufresne M."/>
            <person name="Freitag M."/>
            <person name="Grabherr M."/>
            <person name="Henrissat B."/>
            <person name="Houterman P.M."/>
            <person name="Kang S."/>
            <person name="Shim W.-B."/>
            <person name="Woloshuk C."/>
            <person name="Xie X."/>
            <person name="Xu J.-R."/>
            <person name="Antoniw J."/>
            <person name="Baker S.E."/>
            <person name="Bluhm B.H."/>
            <person name="Breakspear A."/>
            <person name="Brown D.W."/>
            <person name="Butchko R.A.E."/>
            <person name="Chapman S."/>
            <person name="Coulson R."/>
            <person name="Coutinho P.M."/>
            <person name="Danchin E.G.J."/>
            <person name="Diener A."/>
            <person name="Gale L.R."/>
            <person name="Gardiner D.M."/>
            <person name="Goff S."/>
            <person name="Hammond-Kosack K.E."/>
            <person name="Hilburn K."/>
            <person name="Hua-Van A."/>
            <person name="Jonkers W."/>
            <person name="Kazan K."/>
            <person name="Kodira C.D."/>
            <person name="Koehrsen M."/>
            <person name="Kumar L."/>
            <person name="Lee Y.-H."/>
            <person name="Li L."/>
            <person name="Manners J.M."/>
            <person name="Miranda-Saavedra D."/>
            <person name="Mukherjee M."/>
            <person name="Park G."/>
            <person name="Park J."/>
            <person name="Park S.-Y."/>
            <person name="Proctor R.H."/>
            <person name="Regev A."/>
            <person name="Ruiz-Roldan M.C."/>
            <person name="Sain D."/>
            <person name="Sakthikumar S."/>
            <person name="Sykes S."/>
            <person name="Schwartz D.C."/>
            <person name="Turgeon B.G."/>
            <person name="Wapinski I."/>
            <person name="Yoder O."/>
            <person name="Young S."/>
            <person name="Zeng Q."/>
            <person name="Zhou S."/>
            <person name="Galagan J."/>
            <person name="Cuomo C.A."/>
            <person name="Kistler H.C."/>
            <person name="Rep M."/>
        </authorList>
    </citation>
    <scope>GENOME REANNOTATION</scope>
    <source>
        <strain>ATCC MYA-4620 / CBS 123657 / FGSC 9075 / NRRL 31084 / PH-1</strain>
    </source>
</reference>
<reference key="3">
    <citation type="journal article" date="2015" name="BMC Genomics">
        <title>The completed genome sequence of the pathogenic ascomycete fungus Fusarium graminearum.</title>
        <authorList>
            <person name="King R."/>
            <person name="Urban M."/>
            <person name="Hammond-Kosack M.C.U."/>
            <person name="Hassani-Pak K."/>
            <person name="Hammond-Kosack K.E."/>
        </authorList>
    </citation>
    <scope>NUCLEOTIDE SEQUENCE [LARGE SCALE GENOMIC DNA]</scope>
    <source>
        <strain>ATCC MYA-4620 / CBS 123657 / FGSC 9075 / NRRL 31084 / PH-1</strain>
    </source>
</reference>
<reference key="4">
    <citation type="journal article" date="2020" name="Nat. Commun.">
        <title>Synthetic biology based construction of biological activity-related library of fungal decalin-containing diterpenoid pyrones.</title>
        <authorList>
            <person name="Tsukada K."/>
            <person name="Shinki S."/>
            <person name="Kaneko A."/>
            <person name="Murakami K."/>
            <person name="Irie K."/>
            <person name="Murai M."/>
            <person name="Miyoshi H."/>
            <person name="Dan S."/>
            <person name="Kawaji K."/>
            <person name="Hayashi H."/>
            <person name="Kodama E.N."/>
            <person name="Hori A."/>
            <person name="Salim E."/>
            <person name="Kuraishi T."/>
            <person name="Hirata N."/>
            <person name="Kanda Y."/>
            <person name="Asai T."/>
        </authorList>
    </citation>
    <scope>FUNCTION</scope>
    <scope>PATHWAY</scope>
    <scope>BIOTECHNOLOGY</scope>
</reference>
<name>DPFGB_GIBZE</name>
<comment type="function">
    <text evidence="2 5">Terpene cyclase; part of the gene cluster that mediates the biosynthesis of diterpenoid pyrones (PubMed:32286350). The first step of the pathway is the synthesis of the alpha-pyrone moiety by the polyketide synthase dpfgA via condensation of one acetyl-CoA starter unit with 3 malonyl-CoA units and 2 methylations (Probable). The alpha-pyrone is then combined with geranylgeranyl pyrophosphate (GGPP) formed by the GGPP synthase dpfgD through the action of the prenyltransferase dpfgC to yield a linear alpha-pyrone diterpenoid (Probable). Subsequent steps in the diterpenoid pyrone biosynthetic pathway involve the decalin core formation, which is initiated by the epoxidation of the C10-C11 olefin by the FAD-dependent oxidoreductase dpfgE, and is followed by a cyclization cascade catalyzed by the terpene cyclase dpfgB (Probable). The short chain dehydrogenase/reductase dpfgG then oxidizes the 8S hydroxy group to a ketone and the short chain dehydrogenase/reductase dpfgH reduces the ketone to the 8R hydroxy group to yield higginsianin B (PubMed:32286350). Higginsianin B is further methylated by the methyltransferase dpfgI to produce the intermediate named FDDP B (PubMed:32286350). The cytochrome P450 monooxygenase dfgpJ then catalyzes a three-step oxidation at C-27 to generate a carboxylic acid as well as C-26 hydroxylation (PubMed:32286350). Finally, methyltransferase dpfgK methylates the carboxylic acid generated by dpfgJ, yielding the final diterpenoid pyrones from the pathway which were named FDDP D and FDDP E (PubMed:32286350).</text>
</comment>
<comment type="pathway">
    <text evidence="5">Secondary metabolite biosynthesis; terpenoid biosynthesis.</text>
</comment>
<comment type="subcellular location">
    <subcellularLocation>
        <location evidence="1">Membrane</location>
        <topology evidence="1">Multi-pass membrane protein</topology>
    </subcellularLocation>
</comment>
<comment type="biotechnology">
    <text evidence="2">Diterpenoid pyrones display various biological activities and FDDP E shows anti-HIV activity (PubMed:32286350). FDDP D and FDDP E show also inhibitory activity of 42-mer-amyloid beta aggregation that is involved in the pathogenesis of Alzheimer's disease (PubMed:32286350).</text>
</comment>
<comment type="similarity">
    <text evidence="4">Belongs to the paxB family.</text>
</comment>
<comment type="sequence caution" evidence="4">
    <conflict type="erroneous gene model prediction">
        <sequence resource="EMBL-CDS" id="CEF79629"/>
    </conflict>
    <text>The predicted gene has been split into 2 genes: dpfgB and dpfgG.</text>
</comment>
<evidence type="ECO:0000255" key="1"/>
<evidence type="ECO:0000269" key="2">
    <source>
    </source>
</evidence>
<evidence type="ECO:0000303" key="3">
    <source>
    </source>
</evidence>
<evidence type="ECO:0000305" key="4"/>
<evidence type="ECO:0000305" key="5">
    <source>
    </source>
</evidence>
<protein>
    <recommendedName>
        <fullName evidence="3">Terpene cyclase dpfgB</fullName>
        <ecNumber evidence="5">4.2.3.-</ecNumber>
    </recommendedName>
    <alternativeName>
        <fullName evidence="3">Diterpenoid pyrone biosynthesis cluster protein B</fullName>
    </alternativeName>
</protein>
<organism>
    <name type="scientific">Gibberella zeae (strain ATCC MYA-4620 / CBS 123657 / FGSC 9075 / NRRL 31084 / PH-1)</name>
    <name type="common">Wheat head blight fungus</name>
    <name type="synonym">Fusarium graminearum</name>
    <dbReference type="NCBI Taxonomy" id="229533"/>
    <lineage>
        <taxon>Eukaryota</taxon>
        <taxon>Fungi</taxon>
        <taxon>Dikarya</taxon>
        <taxon>Ascomycota</taxon>
        <taxon>Pezizomycotina</taxon>
        <taxon>Sordariomycetes</taxon>
        <taxon>Hypocreomycetidae</taxon>
        <taxon>Hypocreales</taxon>
        <taxon>Nectriaceae</taxon>
        <taxon>Fusarium</taxon>
    </lineage>
</organism>
<gene>
    <name evidence="3" type="primary">dpfgB</name>
    <name type="ORF">FG04594</name>
    <name type="ORF">FGRAMPH1_01T15659</name>
</gene>
<keyword id="KW-0456">Lyase</keyword>
<keyword id="KW-0472">Membrane</keyword>
<keyword id="KW-1185">Reference proteome</keyword>
<keyword id="KW-0812">Transmembrane</keyword>
<keyword id="KW-1133">Transmembrane helix</keyword>
<dbReference type="EC" id="4.2.3.-" evidence="5"/>
<dbReference type="EMBL" id="HG970333">
    <property type="protein sequence ID" value="CEF79629.1"/>
    <property type="status" value="ALT_SEQ"/>
    <property type="molecule type" value="Genomic_DNA"/>
</dbReference>
<dbReference type="InParanoid" id="P9WEY0"/>
<dbReference type="UniPathway" id="UPA00213"/>
<dbReference type="Proteomes" id="UP000070720">
    <property type="component" value="Chromosome 2"/>
</dbReference>
<dbReference type="GO" id="GO:0016020">
    <property type="term" value="C:membrane"/>
    <property type="evidence" value="ECO:0007669"/>
    <property type="project" value="UniProtKB-SubCell"/>
</dbReference>
<dbReference type="GO" id="GO:0016829">
    <property type="term" value="F:lyase activity"/>
    <property type="evidence" value="ECO:0007669"/>
    <property type="project" value="UniProtKB-KW"/>
</dbReference>
<dbReference type="GO" id="GO:0016114">
    <property type="term" value="P:terpenoid biosynthetic process"/>
    <property type="evidence" value="ECO:0007669"/>
    <property type="project" value="UniProtKB-UniPathway"/>
</dbReference>
<dbReference type="InterPro" id="IPR039020">
    <property type="entry name" value="PaxB-like"/>
</dbReference>
<dbReference type="PANTHER" id="PTHR42038">
    <property type="match status" value="1"/>
</dbReference>
<dbReference type="PANTHER" id="PTHR42038:SF2">
    <property type="entry name" value="TERPENE CYCLASE AUSL"/>
    <property type="match status" value="1"/>
</dbReference>
<dbReference type="Pfam" id="PF25129">
    <property type="entry name" value="Pyr4-TMTC"/>
    <property type="match status" value="1"/>
</dbReference>
<feature type="chain" id="PRO_0000451529" description="Terpene cyclase dpfgB">
    <location>
        <begin position="1"/>
        <end position="242"/>
    </location>
</feature>
<feature type="transmembrane region" description="Helical" evidence="1">
    <location>
        <begin position="15"/>
        <end position="37"/>
    </location>
</feature>
<feature type="transmembrane region" description="Helical" evidence="1">
    <location>
        <begin position="51"/>
        <end position="71"/>
    </location>
</feature>
<feature type="transmembrane region" description="Helical" evidence="1">
    <location>
        <begin position="75"/>
        <end position="95"/>
    </location>
</feature>
<feature type="transmembrane region" description="Helical" evidence="1">
    <location>
        <begin position="112"/>
        <end position="132"/>
    </location>
</feature>
<feature type="transmembrane region" description="Helical" evidence="1">
    <location>
        <begin position="141"/>
        <end position="161"/>
    </location>
</feature>
<feature type="transmembrane region" description="Helical" evidence="1">
    <location>
        <begin position="169"/>
        <end position="189"/>
    </location>
</feature>
<feature type="transmembrane region" description="Helical" evidence="1">
    <location>
        <begin position="205"/>
        <end position="225"/>
    </location>
</feature>
<proteinExistence type="evidence at protein level"/>
<sequence length="242" mass="27585">MEVADPSRAPPEYKDVAWIADTCKLLMGIGWTTNYVGMIYKSLKDETYAMALMALCCNFAWELTYALIYPFGSDLEMYVHFSGLMLNCGVMYTAVKNAHREWGHSPLVLRNLPLIFIICVSGFMSGHVALAAQVGPSLAQAWSAYGCQLLLSVGGLCQLLCRGHSRGASYFLWFSRFFGSLVLVPQDILRYKYWRVDHEYMGSPLYIWFVCIFLLLDGSYGICLWYVRRFERQTAVAHKKKK</sequence>
<accession>P9WEY0</accession>
<accession>A0A098DL10</accession>
<accession>A0A0E0S804</accession>